<organism>
    <name type="scientific">Nitratidesulfovibrio vulgaris (strain DSM 19637 / Miyazaki F)</name>
    <name type="common">Desulfovibrio vulgaris</name>
    <dbReference type="NCBI Taxonomy" id="883"/>
    <lineage>
        <taxon>Bacteria</taxon>
        <taxon>Pseudomonadati</taxon>
        <taxon>Thermodesulfobacteriota</taxon>
        <taxon>Desulfovibrionia</taxon>
        <taxon>Desulfovibrionales</taxon>
        <taxon>Desulfovibrionaceae</taxon>
        <taxon>Nitratidesulfovibrio</taxon>
    </lineage>
</organism>
<name>PANC_NITV9</name>
<keyword id="KW-0067">ATP-binding</keyword>
<keyword id="KW-0963">Cytoplasm</keyword>
<keyword id="KW-0436">Ligase</keyword>
<keyword id="KW-0547">Nucleotide-binding</keyword>
<keyword id="KW-0566">Pantothenate biosynthesis</keyword>
<proteinExistence type="inferred from homology"/>
<dbReference type="EC" id="6.3.2.1" evidence="1"/>
<dbReference type="EMBL" id="CP001197">
    <property type="protein sequence ID" value="ACL09879.1"/>
    <property type="molecule type" value="Genomic_DNA"/>
</dbReference>
<dbReference type="SMR" id="B8DSC4"/>
<dbReference type="STRING" id="883.DvMF_2942"/>
<dbReference type="KEGG" id="dvm:DvMF_2942"/>
<dbReference type="eggNOG" id="COG0414">
    <property type="taxonomic scope" value="Bacteria"/>
</dbReference>
<dbReference type="HOGENOM" id="CLU_047148_0_0_7"/>
<dbReference type="OrthoDB" id="9773087at2"/>
<dbReference type="UniPathway" id="UPA00028">
    <property type="reaction ID" value="UER00005"/>
</dbReference>
<dbReference type="GO" id="GO:0005829">
    <property type="term" value="C:cytosol"/>
    <property type="evidence" value="ECO:0007669"/>
    <property type="project" value="TreeGrafter"/>
</dbReference>
<dbReference type="GO" id="GO:0005524">
    <property type="term" value="F:ATP binding"/>
    <property type="evidence" value="ECO:0007669"/>
    <property type="project" value="UniProtKB-KW"/>
</dbReference>
<dbReference type="GO" id="GO:0004592">
    <property type="term" value="F:pantoate-beta-alanine ligase activity"/>
    <property type="evidence" value="ECO:0007669"/>
    <property type="project" value="UniProtKB-UniRule"/>
</dbReference>
<dbReference type="GO" id="GO:0015940">
    <property type="term" value="P:pantothenate biosynthetic process"/>
    <property type="evidence" value="ECO:0007669"/>
    <property type="project" value="UniProtKB-UniRule"/>
</dbReference>
<dbReference type="CDD" id="cd00560">
    <property type="entry name" value="PanC"/>
    <property type="match status" value="1"/>
</dbReference>
<dbReference type="Gene3D" id="3.40.50.620">
    <property type="entry name" value="HUPs"/>
    <property type="match status" value="1"/>
</dbReference>
<dbReference type="Gene3D" id="3.30.1300.10">
    <property type="entry name" value="Pantoate-beta-alanine ligase, C-terminal domain"/>
    <property type="match status" value="1"/>
</dbReference>
<dbReference type="HAMAP" id="MF_00158">
    <property type="entry name" value="PanC"/>
    <property type="match status" value="1"/>
</dbReference>
<dbReference type="InterPro" id="IPR003721">
    <property type="entry name" value="Pantoate_ligase"/>
</dbReference>
<dbReference type="InterPro" id="IPR042176">
    <property type="entry name" value="Pantoate_ligase_C"/>
</dbReference>
<dbReference type="InterPro" id="IPR014729">
    <property type="entry name" value="Rossmann-like_a/b/a_fold"/>
</dbReference>
<dbReference type="NCBIfam" id="TIGR00018">
    <property type="entry name" value="panC"/>
    <property type="match status" value="1"/>
</dbReference>
<dbReference type="PANTHER" id="PTHR21299">
    <property type="entry name" value="CYTIDYLATE KINASE/PANTOATE-BETA-ALANINE LIGASE"/>
    <property type="match status" value="1"/>
</dbReference>
<dbReference type="PANTHER" id="PTHR21299:SF1">
    <property type="entry name" value="PANTOATE--BETA-ALANINE LIGASE"/>
    <property type="match status" value="1"/>
</dbReference>
<dbReference type="Pfam" id="PF02569">
    <property type="entry name" value="Pantoate_ligase"/>
    <property type="match status" value="1"/>
</dbReference>
<dbReference type="SUPFAM" id="SSF52374">
    <property type="entry name" value="Nucleotidylyl transferase"/>
    <property type="match status" value="1"/>
</dbReference>
<protein>
    <recommendedName>
        <fullName evidence="1">Pantothenate synthetase</fullName>
        <shortName evidence="1">PS</shortName>
        <ecNumber evidence="1">6.3.2.1</ecNumber>
    </recommendedName>
    <alternativeName>
        <fullName evidence="1">Pantoate--beta-alanine ligase</fullName>
    </alternativeName>
    <alternativeName>
        <fullName evidence="1">Pantoate-activating enzyme</fullName>
    </alternativeName>
</protein>
<comment type="function">
    <text evidence="1">Catalyzes the condensation of pantoate with beta-alanine in an ATP-dependent reaction via a pantoyl-adenylate intermediate.</text>
</comment>
<comment type="catalytic activity">
    <reaction evidence="1">
        <text>(R)-pantoate + beta-alanine + ATP = (R)-pantothenate + AMP + diphosphate + H(+)</text>
        <dbReference type="Rhea" id="RHEA:10912"/>
        <dbReference type="ChEBI" id="CHEBI:15378"/>
        <dbReference type="ChEBI" id="CHEBI:15980"/>
        <dbReference type="ChEBI" id="CHEBI:29032"/>
        <dbReference type="ChEBI" id="CHEBI:30616"/>
        <dbReference type="ChEBI" id="CHEBI:33019"/>
        <dbReference type="ChEBI" id="CHEBI:57966"/>
        <dbReference type="ChEBI" id="CHEBI:456215"/>
        <dbReference type="EC" id="6.3.2.1"/>
    </reaction>
</comment>
<comment type="pathway">
    <text evidence="1">Cofactor biosynthesis; (R)-pantothenate biosynthesis; (R)-pantothenate from (R)-pantoate and beta-alanine: step 1/1.</text>
</comment>
<comment type="subunit">
    <text evidence="1">Homodimer.</text>
</comment>
<comment type="subcellular location">
    <subcellularLocation>
        <location evidence="1">Cytoplasm</location>
    </subcellularLocation>
</comment>
<comment type="miscellaneous">
    <text evidence="1">The reaction proceeds by a bi uni uni bi ping pong mechanism.</text>
</comment>
<comment type="similarity">
    <text evidence="1">Belongs to the pantothenate synthetase family.</text>
</comment>
<sequence>MQILTDPRTLQQTCLRWRADGQHTVLVPTMGYYHSGHESLMSYARSVGDKVVVSLFVNPTQFGPGEDLAAYPRDLERDAALAEANGADILFTPQPADMFPAGHATWIEVPSLAGTLCGVSRPTHFRGVCTVVMKLFQLAMPRTAVFGQKDWQQLAIIRRMARDLNVPVDVVGRPIVREQDGLAMSSRNIYLSTEERAQAPNIHHGLALGRALVQGGERDAAAVAEAMRRYWRESLPLAQEDYISIVHPETLEPLARITDAALCAVAFRLGKARLIDNMLLAGE</sequence>
<gene>
    <name evidence="1" type="primary">panC</name>
    <name type="ordered locus">DvMF_2942</name>
</gene>
<accession>B8DSC4</accession>
<reference key="1">
    <citation type="submission" date="2008-10" db="EMBL/GenBank/DDBJ databases">
        <title>Complete sequence of Desulfovibrio vulgaris str. 'Miyazaki F'.</title>
        <authorList>
            <person name="Lucas S."/>
            <person name="Copeland A."/>
            <person name="Lapidus A."/>
            <person name="Glavina del Rio T."/>
            <person name="Dalin E."/>
            <person name="Tice H."/>
            <person name="Bruce D."/>
            <person name="Goodwin L."/>
            <person name="Pitluck S."/>
            <person name="Sims D."/>
            <person name="Brettin T."/>
            <person name="Detter J.C."/>
            <person name="Han C."/>
            <person name="Larimer F."/>
            <person name="Land M."/>
            <person name="Hauser L."/>
            <person name="Kyrpides N."/>
            <person name="Mikhailova N."/>
            <person name="Hazen T.C."/>
            <person name="Richardson P."/>
        </authorList>
    </citation>
    <scope>NUCLEOTIDE SEQUENCE [LARGE SCALE GENOMIC DNA]</scope>
    <source>
        <strain>DSM 19637 / Miyazaki F</strain>
    </source>
</reference>
<evidence type="ECO:0000255" key="1">
    <source>
        <dbReference type="HAMAP-Rule" id="MF_00158"/>
    </source>
</evidence>
<feature type="chain" id="PRO_1000118145" description="Pantothenate synthetase">
    <location>
        <begin position="1"/>
        <end position="283"/>
    </location>
</feature>
<feature type="active site" description="Proton donor" evidence="1">
    <location>
        <position position="37"/>
    </location>
</feature>
<feature type="binding site" evidence="1">
    <location>
        <begin position="30"/>
        <end position="37"/>
    </location>
    <ligand>
        <name>ATP</name>
        <dbReference type="ChEBI" id="CHEBI:30616"/>
    </ligand>
</feature>
<feature type="binding site" evidence="1">
    <location>
        <position position="61"/>
    </location>
    <ligand>
        <name>(R)-pantoate</name>
        <dbReference type="ChEBI" id="CHEBI:15980"/>
    </ligand>
</feature>
<feature type="binding site" evidence="1">
    <location>
        <position position="61"/>
    </location>
    <ligand>
        <name>beta-alanine</name>
        <dbReference type="ChEBI" id="CHEBI:57966"/>
    </ligand>
</feature>
<feature type="binding site" evidence="1">
    <location>
        <begin position="147"/>
        <end position="150"/>
    </location>
    <ligand>
        <name>ATP</name>
        <dbReference type="ChEBI" id="CHEBI:30616"/>
    </ligand>
</feature>
<feature type="binding site" evidence="1">
    <location>
        <position position="153"/>
    </location>
    <ligand>
        <name>(R)-pantoate</name>
        <dbReference type="ChEBI" id="CHEBI:15980"/>
    </ligand>
</feature>
<feature type="binding site" evidence="1">
    <location>
        <position position="176"/>
    </location>
    <ligand>
        <name>ATP</name>
        <dbReference type="ChEBI" id="CHEBI:30616"/>
    </ligand>
</feature>
<feature type="binding site" evidence="1">
    <location>
        <begin position="184"/>
        <end position="187"/>
    </location>
    <ligand>
        <name>ATP</name>
        <dbReference type="ChEBI" id="CHEBI:30616"/>
    </ligand>
</feature>